<sequence length="255" mass="28328">MMHDDPNEAGLPPDDAALPDEAADGADEVNPLHHRRIRSFVTRAGRVSTGQRRAIDELGPRFVVPYAPTLPDWDAVFGRSAPRILEIGFGMGASTAEIAAHRPGDDFLGVEVHEPGVGALLKLIGEQGLTNIRIIQHDAVEVLEHMLAPESLDGVHIFFPDPWHKARHHKRRLIQPPLVAQLAARLKPGAYLHCATDWQNYAEQMLEVLSAEPTLENTAADYAPRPDYRPVTKFERRGLRLGHGVWDLVFRKRAA</sequence>
<proteinExistence type="inferred from homology"/>
<evidence type="ECO:0000250" key="1"/>
<evidence type="ECO:0000255" key="2">
    <source>
        <dbReference type="HAMAP-Rule" id="MF_01057"/>
    </source>
</evidence>
<evidence type="ECO:0000256" key="3">
    <source>
        <dbReference type="SAM" id="MobiDB-lite"/>
    </source>
</evidence>
<accession>A4JC58</accession>
<feature type="chain" id="PRO_1000064388" description="tRNA (guanine-N(7)-)-methyltransferase">
    <location>
        <begin position="1"/>
        <end position="255"/>
    </location>
</feature>
<feature type="region of interest" description="Disordered" evidence="3">
    <location>
        <begin position="1"/>
        <end position="30"/>
    </location>
</feature>
<feature type="compositionally biased region" description="Acidic residues" evidence="3">
    <location>
        <begin position="17"/>
        <end position="27"/>
    </location>
</feature>
<feature type="active site" evidence="1">
    <location>
        <position position="161"/>
    </location>
</feature>
<feature type="binding site" evidence="2">
    <location>
        <position position="86"/>
    </location>
    <ligand>
        <name>S-adenosyl-L-methionine</name>
        <dbReference type="ChEBI" id="CHEBI:59789"/>
    </ligand>
</feature>
<feature type="binding site" evidence="2">
    <location>
        <position position="111"/>
    </location>
    <ligand>
        <name>S-adenosyl-L-methionine</name>
        <dbReference type="ChEBI" id="CHEBI:59789"/>
    </ligand>
</feature>
<feature type="binding site" evidence="2">
    <location>
        <position position="138"/>
    </location>
    <ligand>
        <name>S-adenosyl-L-methionine</name>
        <dbReference type="ChEBI" id="CHEBI:59789"/>
    </ligand>
</feature>
<feature type="binding site" evidence="2">
    <location>
        <position position="161"/>
    </location>
    <ligand>
        <name>S-adenosyl-L-methionine</name>
        <dbReference type="ChEBI" id="CHEBI:59789"/>
    </ligand>
</feature>
<feature type="binding site" evidence="2">
    <location>
        <position position="165"/>
    </location>
    <ligand>
        <name>substrate</name>
    </ligand>
</feature>
<feature type="binding site" evidence="2">
    <location>
        <position position="197"/>
    </location>
    <ligand>
        <name>substrate</name>
    </ligand>
</feature>
<feature type="binding site" evidence="2">
    <location>
        <begin position="232"/>
        <end position="235"/>
    </location>
    <ligand>
        <name>substrate</name>
    </ligand>
</feature>
<comment type="function">
    <text evidence="2">Catalyzes the formation of N(7)-methylguanine at position 46 (m7G46) in tRNA.</text>
</comment>
<comment type="catalytic activity">
    <reaction evidence="2">
        <text>guanosine(46) in tRNA + S-adenosyl-L-methionine = N(7)-methylguanosine(46) in tRNA + S-adenosyl-L-homocysteine</text>
        <dbReference type="Rhea" id="RHEA:42708"/>
        <dbReference type="Rhea" id="RHEA-COMP:10188"/>
        <dbReference type="Rhea" id="RHEA-COMP:10189"/>
        <dbReference type="ChEBI" id="CHEBI:57856"/>
        <dbReference type="ChEBI" id="CHEBI:59789"/>
        <dbReference type="ChEBI" id="CHEBI:74269"/>
        <dbReference type="ChEBI" id="CHEBI:74480"/>
        <dbReference type="EC" id="2.1.1.33"/>
    </reaction>
</comment>
<comment type="pathway">
    <text evidence="2">tRNA modification; N(7)-methylguanine-tRNA biosynthesis.</text>
</comment>
<comment type="similarity">
    <text evidence="2">Belongs to the class I-like SAM-binding methyltransferase superfamily. TrmB family.</text>
</comment>
<keyword id="KW-0489">Methyltransferase</keyword>
<keyword id="KW-0949">S-adenosyl-L-methionine</keyword>
<keyword id="KW-0808">Transferase</keyword>
<keyword id="KW-0819">tRNA processing</keyword>
<name>TRMB_BURVG</name>
<dbReference type="EC" id="2.1.1.33" evidence="2"/>
<dbReference type="EMBL" id="CP000614">
    <property type="protein sequence ID" value="ABO53861.1"/>
    <property type="molecule type" value="Genomic_DNA"/>
</dbReference>
<dbReference type="SMR" id="A4JC58"/>
<dbReference type="KEGG" id="bvi:Bcep1808_0849"/>
<dbReference type="eggNOG" id="COG0220">
    <property type="taxonomic scope" value="Bacteria"/>
</dbReference>
<dbReference type="HOGENOM" id="CLU_050910_0_1_4"/>
<dbReference type="UniPathway" id="UPA00989"/>
<dbReference type="Proteomes" id="UP000002287">
    <property type="component" value="Chromosome 1"/>
</dbReference>
<dbReference type="GO" id="GO:0043527">
    <property type="term" value="C:tRNA methyltransferase complex"/>
    <property type="evidence" value="ECO:0007669"/>
    <property type="project" value="TreeGrafter"/>
</dbReference>
<dbReference type="GO" id="GO:0008176">
    <property type="term" value="F:tRNA (guanine(46)-N7)-methyltransferase activity"/>
    <property type="evidence" value="ECO:0007669"/>
    <property type="project" value="UniProtKB-UniRule"/>
</dbReference>
<dbReference type="CDD" id="cd02440">
    <property type="entry name" value="AdoMet_MTases"/>
    <property type="match status" value="1"/>
</dbReference>
<dbReference type="FunFam" id="3.40.50.150:FF:000035">
    <property type="entry name" value="tRNA (guanine-N(7)-)-methyltransferase"/>
    <property type="match status" value="1"/>
</dbReference>
<dbReference type="Gene3D" id="3.40.50.150">
    <property type="entry name" value="Vaccinia Virus protein VP39"/>
    <property type="match status" value="1"/>
</dbReference>
<dbReference type="HAMAP" id="MF_01057">
    <property type="entry name" value="tRNA_methyltr_TrmB"/>
    <property type="match status" value="1"/>
</dbReference>
<dbReference type="InterPro" id="IPR029063">
    <property type="entry name" value="SAM-dependent_MTases_sf"/>
</dbReference>
<dbReference type="InterPro" id="IPR003358">
    <property type="entry name" value="tRNA_(Gua-N-7)_MeTrfase_Trmb"/>
</dbReference>
<dbReference type="InterPro" id="IPR055361">
    <property type="entry name" value="tRNA_methyltr_TrmB_bact"/>
</dbReference>
<dbReference type="NCBIfam" id="TIGR00091">
    <property type="entry name" value="tRNA (guanosine(46)-N7)-methyltransferase TrmB"/>
    <property type="match status" value="1"/>
</dbReference>
<dbReference type="PANTHER" id="PTHR23417">
    <property type="entry name" value="3-DEOXY-D-MANNO-OCTULOSONIC-ACID TRANSFERASE/TRNA GUANINE-N 7 - -METHYLTRANSFERASE"/>
    <property type="match status" value="1"/>
</dbReference>
<dbReference type="PANTHER" id="PTHR23417:SF14">
    <property type="entry name" value="PENTACOTRIPEPTIDE-REPEAT REGION OF PRORP DOMAIN-CONTAINING PROTEIN"/>
    <property type="match status" value="1"/>
</dbReference>
<dbReference type="Pfam" id="PF02390">
    <property type="entry name" value="Methyltransf_4"/>
    <property type="match status" value="1"/>
</dbReference>
<dbReference type="SUPFAM" id="SSF53335">
    <property type="entry name" value="S-adenosyl-L-methionine-dependent methyltransferases"/>
    <property type="match status" value="1"/>
</dbReference>
<dbReference type="PROSITE" id="PS51625">
    <property type="entry name" value="SAM_MT_TRMB"/>
    <property type="match status" value="1"/>
</dbReference>
<reference key="1">
    <citation type="submission" date="2007-03" db="EMBL/GenBank/DDBJ databases">
        <title>Complete sequence of chromosome 1 of Burkholderia vietnamiensis G4.</title>
        <authorList>
            <consortium name="US DOE Joint Genome Institute"/>
            <person name="Copeland A."/>
            <person name="Lucas S."/>
            <person name="Lapidus A."/>
            <person name="Barry K."/>
            <person name="Detter J.C."/>
            <person name="Glavina del Rio T."/>
            <person name="Hammon N."/>
            <person name="Israni S."/>
            <person name="Dalin E."/>
            <person name="Tice H."/>
            <person name="Pitluck S."/>
            <person name="Chain P."/>
            <person name="Malfatti S."/>
            <person name="Shin M."/>
            <person name="Vergez L."/>
            <person name="Schmutz J."/>
            <person name="Larimer F."/>
            <person name="Land M."/>
            <person name="Hauser L."/>
            <person name="Kyrpides N."/>
            <person name="Tiedje J."/>
            <person name="Richardson P."/>
        </authorList>
    </citation>
    <scope>NUCLEOTIDE SEQUENCE [LARGE SCALE GENOMIC DNA]</scope>
    <source>
        <strain>G4 / LMG 22486</strain>
    </source>
</reference>
<protein>
    <recommendedName>
        <fullName evidence="2">tRNA (guanine-N(7)-)-methyltransferase</fullName>
        <ecNumber evidence="2">2.1.1.33</ecNumber>
    </recommendedName>
    <alternativeName>
        <fullName evidence="2">tRNA (guanine(46)-N(7))-methyltransferase</fullName>
    </alternativeName>
    <alternativeName>
        <fullName evidence="2">tRNA(m7G46)-methyltransferase</fullName>
    </alternativeName>
</protein>
<gene>
    <name evidence="2" type="primary">trmB</name>
    <name type="ordered locus">Bcep1808_0849</name>
</gene>
<organism>
    <name type="scientific">Burkholderia vietnamiensis (strain G4 / LMG 22486)</name>
    <name type="common">Burkholderia cepacia (strain R1808)</name>
    <dbReference type="NCBI Taxonomy" id="269482"/>
    <lineage>
        <taxon>Bacteria</taxon>
        <taxon>Pseudomonadati</taxon>
        <taxon>Pseudomonadota</taxon>
        <taxon>Betaproteobacteria</taxon>
        <taxon>Burkholderiales</taxon>
        <taxon>Burkholderiaceae</taxon>
        <taxon>Burkholderia</taxon>
        <taxon>Burkholderia cepacia complex</taxon>
    </lineage>
</organism>